<name>CDC4_YEAST</name>
<proteinExistence type="evidence at protein level"/>
<reference key="1">
    <citation type="journal article" date="1987" name="J. Mol. Biol.">
        <title>Structural comparison of the yeast cell division cycle gene CDC4 and a related pseudogene.</title>
        <authorList>
            <person name="Yochem J."/>
            <person name="Byers B."/>
        </authorList>
    </citation>
    <scope>NUCLEOTIDE SEQUENCE [GENOMIC DNA]</scope>
</reference>
<reference key="2">
    <citation type="journal article" date="1995" name="Nat. Genet.">
        <title>Analysis of the nucleotide sequence of chromosome VI from Saccharomyces cerevisiae.</title>
        <authorList>
            <person name="Murakami Y."/>
            <person name="Naitou M."/>
            <person name="Hagiwara H."/>
            <person name="Shibata T."/>
            <person name="Ozawa M."/>
            <person name="Sasanuma S."/>
            <person name="Sasanuma M."/>
            <person name="Tsuchiya Y."/>
            <person name="Soeda E."/>
            <person name="Yokoyama K."/>
            <person name="Yamazaki M."/>
            <person name="Tashiro H."/>
            <person name="Eki T."/>
        </authorList>
    </citation>
    <scope>NUCLEOTIDE SEQUENCE [LARGE SCALE GENOMIC DNA]</scope>
    <source>
        <strain>ATCC 204508 / S288c</strain>
    </source>
</reference>
<reference key="3">
    <citation type="journal article" date="2014" name="G3 (Bethesda)">
        <title>The reference genome sequence of Saccharomyces cerevisiae: Then and now.</title>
        <authorList>
            <person name="Engel S.R."/>
            <person name="Dietrich F.S."/>
            <person name="Fisk D.G."/>
            <person name="Binkley G."/>
            <person name="Balakrishnan R."/>
            <person name="Costanzo M.C."/>
            <person name="Dwight S.S."/>
            <person name="Hitz B.C."/>
            <person name="Karra K."/>
            <person name="Nash R.S."/>
            <person name="Weng S."/>
            <person name="Wong E.D."/>
            <person name="Lloyd P."/>
            <person name="Skrzypek M.S."/>
            <person name="Miyasato S.R."/>
            <person name="Simison M."/>
            <person name="Cherry J.M."/>
        </authorList>
    </citation>
    <scope>GENOME REANNOTATION</scope>
    <source>
        <strain>ATCC 204508 / S288c</strain>
    </source>
</reference>
<reference key="4">
    <citation type="submission" date="1994-09" db="EMBL/GenBank/DDBJ databases">
        <authorList>
            <person name="Barrell B.G."/>
            <person name="Churcher C."/>
            <person name="Rajandream M.A."/>
        </authorList>
    </citation>
    <scope>NUCLEOTIDE SEQUENCE [GENOMIC DNA] OF 1-579</scope>
    <source>
        <strain>ATCC 204511 / S288c / AB972</strain>
    </source>
</reference>
<reference key="5">
    <citation type="journal article" date="1994" name="EMBO J.">
        <title>Regulated degradation of the transcription factor Gcn4.</title>
        <authorList>
            <person name="Kornitzer D."/>
            <person name="Raboy B."/>
            <person name="Kulka R.G."/>
            <person name="Fink G.R."/>
        </authorList>
    </citation>
    <scope>FUNCTION</scope>
</reference>
<reference key="6">
    <citation type="journal article" date="1996" name="Cell">
        <title>SKP1 connects cell cycle regulators to the ubiquitin proteolysis machinery through a novel motif, the F-box.</title>
        <authorList>
            <person name="Bai C."/>
            <person name="Sen P."/>
            <person name="Hofmann K."/>
            <person name="Ma L."/>
            <person name="Goebl M."/>
            <person name="Harper J.W."/>
            <person name="Elledge S.J."/>
        </authorList>
    </citation>
    <scope>INTERACTION WITH SKP1/CBF3D</scope>
    <source>
        <strain>ATCC 204508 / S288c</strain>
    </source>
</reference>
<reference key="7">
    <citation type="journal article" date="1997" name="Cell">
        <title>F-box proteins are receptors that recruit phosphorylated substrates to the SCF ubiquitin-ligase complex.</title>
        <authorList>
            <person name="Skowyra D."/>
            <person name="Craig K.L."/>
            <person name="Tyers M."/>
            <person name="Elledge S.J."/>
            <person name="Harper J.W."/>
        </authorList>
    </citation>
    <scope>FUNCTION</scope>
    <scope>SUBUNIT</scope>
</reference>
<reference key="8">
    <citation type="journal article" date="1997" name="Cell">
        <title>A complex of Cdc4p, Skp1p, and Cdc53p/cullin catalyzes ubiquitination of the phosphorylated CDK inhibitor Sic1p.</title>
        <authorList>
            <person name="Feldman R.M."/>
            <person name="Correll C.C."/>
            <person name="Kaplan K.B."/>
            <person name="Deshaies R.J."/>
        </authorList>
    </citation>
    <scope>FUNCTION</scope>
    <scope>SUBUNIT</scope>
</reference>
<reference key="9">
    <citation type="journal article" date="1997" name="EMBO J.">
        <title>Grr1 of Saccharomyces cerevisiae is connected to the ubiquitin proteolysis machinery through Skp1: coupling glucose sensing to gene expression and the cell cycle.</title>
        <authorList>
            <person name="Li F.N."/>
            <person name="Johnston M."/>
        </authorList>
    </citation>
    <scope>FUNCTION</scope>
    <scope>INTERACTION WITH SKP1</scope>
</reference>
<reference key="10">
    <citation type="journal article" date="1997" name="EMBO J.">
        <title>The Cdc4/34/53 pathway targets Cdc6p for proteolysis in budding yeast.</title>
        <authorList>
            <person name="Drury L.S."/>
            <person name="Perkins G."/>
            <person name="Diffley J.F."/>
        </authorList>
    </citation>
    <scope>FUNCTION</scope>
    <scope>INTERACTION WITH CDC6</scope>
</reference>
<reference key="11">
    <citation type="journal article" date="1998" name="EMBO J.">
        <title>The Cdc42p effector Gic2p is targeted for ubiquitin-dependent degradation by the SCFGrr1 complex.</title>
        <authorList>
            <person name="Jaquenoud M."/>
            <person name="Gulli M.P."/>
            <person name="Peter K."/>
            <person name="Peter M."/>
        </authorList>
    </citation>
    <scope>FUNCTION</scope>
    <scope>SUBUNIT</scope>
</reference>
<reference key="12">
    <citation type="journal article" date="1998" name="Genes Dev.">
        <title>Cdc53 is a scaffold protein for multiple Cdc34/Skp1/F-box protein complexes that regulate cell division and methionine biosynthesis in yeast.</title>
        <authorList>
            <person name="Patton E.E."/>
            <person name="Willems A.R."/>
            <person name="Sa D."/>
            <person name="Kuras L."/>
            <person name="Thomas D."/>
            <person name="Craig K.L."/>
            <person name="Tyers M."/>
        </authorList>
    </citation>
    <scope>INTERACTION WITH CDC53</scope>
</reference>
<reference key="13">
    <citation type="journal article" date="1999" name="Genes Dev.">
        <title>Cdc53/cullin and the essential Hrt1 RING-H2 subunit of SCF define a ubiquitin ligase module that activates the E2 enzyme Cdc34.</title>
        <authorList>
            <person name="Seol J.H."/>
            <person name="Feldman R.M.R."/>
            <person name="Zachariae W."/>
            <person name="Shevchenko A."/>
            <person name="Correll C.C."/>
            <person name="Lyapina S."/>
            <person name="Chi Y."/>
            <person name="Galova M."/>
            <person name="Claypool J."/>
            <person name="Sandmeyer S."/>
            <person name="Nasmyth K."/>
            <person name="Shevchenko A."/>
            <person name="Deshaies R.J."/>
        </authorList>
    </citation>
    <scope>INTERACTION WITH HRT1</scope>
</reference>
<reference key="14">
    <citation type="journal article" date="1999" name="Mol. Cell. Biol.">
        <title>Cdc4, a protein required for the onset of S phase, serves an essential function during G(2)/M transition in Saccharomyces cerevisiae.</title>
        <authorList>
            <person name="Goh P.Y."/>
            <person name="Surana U."/>
        </authorList>
    </citation>
    <scope>FUNCTION</scope>
</reference>
<reference key="15">
    <citation type="journal article" date="1999" name="Science">
        <title>Reconstitution of G1 cyclin ubiquitination with complexes containing SCFGrr1 and Rbx1.</title>
        <authorList>
            <person name="Skowyra D."/>
            <person name="Koepp D.M."/>
            <person name="Kamura T."/>
            <person name="Conrad M.N."/>
            <person name="Conaway R.C."/>
            <person name="Conaway J.W."/>
            <person name="Elledge S.J."/>
            <person name="Harper J.W."/>
        </authorList>
    </citation>
    <scope>FUNCTION</scope>
    <scope>RECONSTITUTION OF THE SKF(GRR1)COMPLEX</scope>
</reference>
<reference key="16">
    <citation type="journal article" date="2000" name="EMBO J.">
        <title>Nuclear-specific degradation of Far1 is controlled by the localization of the F-box protein Cdc4.</title>
        <authorList>
            <person name="Blondel M."/>
            <person name="Galan J.M."/>
            <person name="Chi Y."/>
            <person name="Lafourcade C."/>
            <person name="Longaretti C."/>
            <person name="Deshaies R.J."/>
            <person name="Peter M."/>
        </authorList>
    </citation>
    <scope>FUNCTION</scope>
    <scope>SUBCELLULAR LOCATION</scope>
    <scope>MUTAGENESIS OF 82-LYS-ARG-83 AND LYS-85</scope>
</reference>
<reference key="17">
    <citation type="journal article" date="2001" name="EMBO J.">
        <title>Cic1, an adaptor protein specifically linking the 26S proteasome to its substrate, the SCF component Cdc4.</title>
        <authorList>
            <person name="Jaeger S."/>
            <person name="Strayle J."/>
            <person name="Heinemeyer W."/>
            <person name="Wolf D.H."/>
        </authorList>
    </citation>
    <scope>INTERACTION WITH CIC1</scope>
</reference>
<reference key="18">
    <citation type="journal article" date="2004" name="Proteins">
        <title>Functional interaction of 13 yeast SCF complexes with a set of yeast E2 enzymes in vitro.</title>
        <authorList>
            <person name="Kus B.M."/>
            <person name="Caldon C.E."/>
            <person name="Andorn-Broza R."/>
            <person name="Edwards A.M."/>
        </authorList>
    </citation>
    <scope>INTERACTION WITH SKP1</scope>
    <scope>RECONSTITUTION OF THE SCF(CDC4) COMPLEX</scope>
</reference>
<reference key="19">
    <citation type="journal article" date="2007" name="Mol. Cell">
        <title>Structure of a Fbw7-Skp1-cyclin E complex: multisite-phosphorylated substrate recognition by SCF ubiquitin ligases.</title>
        <authorList>
            <person name="Hao B."/>
            <person name="Oehlmann S."/>
            <person name="Sowa M.E."/>
            <person name="Harper J.W."/>
            <person name="Pavletich N.P."/>
        </authorList>
    </citation>
    <scope>HOMODIMERIZATION</scope>
    <scope>INTERACTION WITH SIC1</scope>
</reference>
<reference key="20">
    <citation type="journal article" date="2008" name="Mol. Cell. Proteomics">
        <title>A multidimensional chromatography technology for in-depth phosphoproteome analysis.</title>
        <authorList>
            <person name="Albuquerque C.P."/>
            <person name="Smolka M.B."/>
            <person name="Payne S.H."/>
            <person name="Bafna V."/>
            <person name="Eng J."/>
            <person name="Zhou H."/>
        </authorList>
    </citation>
    <scope>IDENTIFICATION BY MASS SPECTROMETRY [LARGE SCALE ANALYSIS]</scope>
</reference>
<reference key="21">
    <citation type="journal article" date="2009" name="Science">
        <title>Global analysis of Cdk1 substrate phosphorylation sites provides insights into evolution.</title>
        <authorList>
            <person name="Holt L.J."/>
            <person name="Tuch B.B."/>
            <person name="Villen J."/>
            <person name="Johnson A.D."/>
            <person name="Gygi S.P."/>
            <person name="Morgan D.O."/>
        </authorList>
    </citation>
    <scope>PHOSPHORYLATION [LARGE SCALE ANALYSIS] AT SER-104</scope>
    <scope>IDENTIFICATION BY MASS SPECTROMETRY [LARGE SCALE ANALYSIS]</scope>
</reference>
<evidence type="ECO:0000255" key="1">
    <source>
        <dbReference type="PROSITE-ProRule" id="PRU00080"/>
    </source>
</evidence>
<evidence type="ECO:0000256" key="2">
    <source>
        <dbReference type="SAM" id="MobiDB-lite"/>
    </source>
</evidence>
<evidence type="ECO:0000269" key="3">
    <source>
    </source>
</evidence>
<evidence type="ECO:0000269" key="4">
    <source>
    </source>
</evidence>
<evidence type="ECO:0000269" key="5">
    <source>
    </source>
</evidence>
<evidence type="ECO:0000269" key="6">
    <source>
    </source>
</evidence>
<evidence type="ECO:0000269" key="7">
    <source>
    </source>
</evidence>
<evidence type="ECO:0000269" key="8">
    <source>
    </source>
</evidence>
<evidence type="ECO:0000269" key="9">
    <source>
    </source>
</evidence>
<evidence type="ECO:0000269" key="10">
    <source>
    </source>
</evidence>
<evidence type="ECO:0000269" key="11">
    <source>
    </source>
</evidence>
<evidence type="ECO:0000269" key="12">
    <source>
    </source>
</evidence>
<evidence type="ECO:0000269" key="13">
    <source>
    </source>
</evidence>
<evidence type="ECO:0000269" key="14">
    <source>
    </source>
</evidence>
<evidence type="ECO:0000269" key="15">
    <source>
    </source>
</evidence>
<evidence type="ECO:0000269" key="16">
    <source>
    </source>
</evidence>
<evidence type="ECO:0000269" key="17">
    <source>
    </source>
</evidence>
<evidence type="ECO:0000305" key="18"/>
<evidence type="ECO:0007744" key="19">
    <source>
    </source>
</evidence>
<evidence type="ECO:0007829" key="20">
    <source>
        <dbReference type="PDB" id="2P63"/>
    </source>
</evidence>
<evidence type="ECO:0007829" key="21">
    <source>
        <dbReference type="PDB" id="3MKS"/>
    </source>
</evidence>
<evidence type="ECO:0007829" key="22">
    <source>
        <dbReference type="PDB" id="3V7D"/>
    </source>
</evidence>
<organism>
    <name type="scientific">Saccharomyces cerevisiae (strain ATCC 204508 / S288c)</name>
    <name type="common">Baker's yeast</name>
    <dbReference type="NCBI Taxonomy" id="559292"/>
    <lineage>
        <taxon>Eukaryota</taxon>
        <taxon>Fungi</taxon>
        <taxon>Dikarya</taxon>
        <taxon>Ascomycota</taxon>
        <taxon>Saccharomycotina</taxon>
        <taxon>Saccharomycetes</taxon>
        <taxon>Saccharomycetales</taxon>
        <taxon>Saccharomycetaceae</taxon>
        <taxon>Saccharomyces</taxon>
    </lineage>
</organism>
<dbReference type="EMBL" id="X05625">
    <property type="protein sequence ID" value="CAA29113.1"/>
    <property type="molecule type" value="Genomic_DNA"/>
</dbReference>
<dbReference type="EMBL" id="D50617">
    <property type="protein sequence ID" value="BAA09229.1"/>
    <property type="molecule type" value="Genomic_DNA"/>
</dbReference>
<dbReference type="EMBL" id="Z46255">
    <property type="protein sequence ID" value="CAA86341.1"/>
    <property type="molecule type" value="Genomic_DNA"/>
</dbReference>
<dbReference type="EMBL" id="BK006940">
    <property type="protein sequence ID" value="DAA12431.1"/>
    <property type="molecule type" value="Genomic_DNA"/>
</dbReference>
<dbReference type="PIR" id="S56245">
    <property type="entry name" value="S56245"/>
</dbReference>
<dbReference type="RefSeq" id="NP_116585.1">
    <property type="nucleotide sequence ID" value="NM_001179957.1"/>
</dbReference>
<dbReference type="PDB" id="1NEX">
    <property type="method" value="X-ray"/>
    <property type="resolution" value="2.70 A"/>
    <property type="chains" value="B/D=263-744"/>
</dbReference>
<dbReference type="PDB" id="2P63">
    <property type="method" value="X-ray"/>
    <property type="resolution" value="2.67 A"/>
    <property type="chains" value="A/B/C/D=222-273"/>
</dbReference>
<dbReference type="PDB" id="3MKS">
    <property type="method" value="X-ray"/>
    <property type="resolution" value="2.60 A"/>
    <property type="chains" value="B/D=263-744"/>
</dbReference>
<dbReference type="PDB" id="3V7D">
    <property type="method" value="X-ray"/>
    <property type="resolution" value="2.31 A"/>
    <property type="chains" value="B/D=263-744"/>
</dbReference>
<dbReference type="PDBsum" id="1NEX"/>
<dbReference type="PDBsum" id="2P63"/>
<dbReference type="PDBsum" id="3MKS"/>
<dbReference type="PDBsum" id="3V7D"/>
<dbReference type="SMR" id="P07834"/>
<dbReference type="BioGRID" id="31138">
    <property type="interactions" value="618"/>
</dbReference>
<dbReference type="ComplexPortal" id="CPX-3234">
    <property type="entry name" value="SCF-Cdc4 ubiquitin ligase complex"/>
</dbReference>
<dbReference type="DIP" id="DIP-1625N"/>
<dbReference type="FunCoup" id="P07834">
    <property type="interactions" value="287"/>
</dbReference>
<dbReference type="IntAct" id="P07834">
    <property type="interactions" value="14"/>
</dbReference>
<dbReference type="MINT" id="P07834"/>
<dbReference type="STRING" id="4932.YFL009W"/>
<dbReference type="iPTMnet" id="P07834"/>
<dbReference type="PaxDb" id="4932-YFL009W"/>
<dbReference type="PeptideAtlas" id="P07834"/>
<dbReference type="EnsemblFungi" id="YFL009W_mRNA">
    <property type="protein sequence ID" value="YFL009W"/>
    <property type="gene ID" value="YFL009W"/>
</dbReference>
<dbReference type="GeneID" id="850539"/>
<dbReference type="KEGG" id="sce:YFL009W"/>
<dbReference type="AGR" id="SGD:S000001885"/>
<dbReference type="SGD" id="S000001885">
    <property type="gene designation" value="CDC4"/>
</dbReference>
<dbReference type="VEuPathDB" id="FungiDB:YFL009W"/>
<dbReference type="eggNOG" id="KOG0274">
    <property type="taxonomic scope" value="Eukaryota"/>
</dbReference>
<dbReference type="GeneTree" id="ENSGT00940000174696"/>
<dbReference type="HOGENOM" id="CLU_000288_103_3_1"/>
<dbReference type="InParanoid" id="P07834"/>
<dbReference type="OMA" id="WDIAKMK"/>
<dbReference type="OrthoDB" id="190105at2759"/>
<dbReference type="BioCyc" id="YEAST:G3O-30447-MONOMER"/>
<dbReference type="UniPathway" id="UPA00143"/>
<dbReference type="BioGRID-ORCS" id="850539">
    <property type="hits" value="4 hits in 10 CRISPR screens"/>
</dbReference>
<dbReference type="CD-CODE" id="876000F7">
    <property type="entry name" value="Centrosome"/>
</dbReference>
<dbReference type="EvolutionaryTrace" id="P07834"/>
<dbReference type="PRO" id="PR:P07834"/>
<dbReference type="Proteomes" id="UP000002311">
    <property type="component" value="Chromosome VI"/>
</dbReference>
<dbReference type="RNAct" id="P07834">
    <property type="molecule type" value="protein"/>
</dbReference>
<dbReference type="GO" id="GO:0030686">
    <property type="term" value="C:90S preribosome"/>
    <property type="evidence" value="ECO:0000318"/>
    <property type="project" value="GO_Central"/>
</dbReference>
<dbReference type="GO" id="GO:0016363">
    <property type="term" value="C:nuclear matrix"/>
    <property type="evidence" value="ECO:0000314"/>
    <property type="project" value="SGD"/>
</dbReference>
<dbReference type="GO" id="GO:0043224">
    <property type="term" value="C:nuclear SCF ubiquitin ligase complex"/>
    <property type="evidence" value="ECO:0000314"/>
    <property type="project" value="SGD"/>
</dbReference>
<dbReference type="GO" id="GO:0005730">
    <property type="term" value="C:nucleolus"/>
    <property type="evidence" value="ECO:0000318"/>
    <property type="project" value="GO_Central"/>
</dbReference>
<dbReference type="GO" id="GO:0005634">
    <property type="term" value="C:nucleus"/>
    <property type="evidence" value="ECO:0000314"/>
    <property type="project" value="SGD"/>
</dbReference>
<dbReference type="GO" id="GO:0019005">
    <property type="term" value="C:SCF ubiquitin ligase complex"/>
    <property type="evidence" value="ECO:0000314"/>
    <property type="project" value="ComplexPortal"/>
</dbReference>
<dbReference type="GO" id="GO:0050815">
    <property type="term" value="F:phosphoserine residue binding"/>
    <property type="evidence" value="ECO:0000314"/>
    <property type="project" value="SGD"/>
</dbReference>
<dbReference type="GO" id="GO:0034511">
    <property type="term" value="F:U3 snoRNA binding"/>
    <property type="evidence" value="ECO:0000318"/>
    <property type="project" value="GO_Central"/>
</dbReference>
<dbReference type="GO" id="GO:0043130">
    <property type="term" value="F:ubiquitin binding"/>
    <property type="evidence" value="ECO:0000314"/>
    <property type="project" value="SGD"/>
</dbReference>
<dbReference type="GO" id="GO:0051301">
    <property type="term" value="P:cell division"/>
    <property type="evidence" value="ECO:0007669"/>
    <property type="project" value="UniProtKB-KW"/>
</dbReference>
<dbReference type="GO" id="GO:0000480">
    <property type="term" value="P:endonucleolytic cleavage in 5'-ETS of tricistronic rRNA transcript (SSU-rRNA, 5.8S rRNA, LSU-rRNA)"/>
    <property type="evidence" value="ECO:0000318"/>
    <property type="project" value="GO_Central"/>
</dbReference>
<dbReference type="GO" id="GO:0000472">
    <property type="term" value="P:endonucleolytic cleavage to generate mature 5'-end of SSU-rRNA from (SSU-rRNA, 5.8S rRNA, LSU-rRNA)"/>
    <property type="evidence" value="ECO:0000318"/>
    <property type="project" value="GO_Central"/>
</dbReference>
<dbReference type="GO" id="GO:0000082">
    <property type="term" value="P:G1/S transition of mitotic cell cycle"/>
    <property type="evidence" value="ECO:0000315"/>
    <property type="project" value="SGD"/>
</dbReference>
<dbReference type="GO" id="GO:0000086">
    <property type="term" value="P:G2/M transition of mitotic cell cycle"/>
    <property type="evidence" value="ECO:0000315"/>
    <property type="project" value="SGD"/>
</dbReference>
<dbReference type="GO" id="GO:0051321">
    <property type="term" value="P:meiotic cell cycle"/>
    <property type="evidence" value="ECO:0000315"/>
    <property type="project" value="SGD"/>
</dbReference>
<dbReference type="GO" id="GO:0016567">
    <property type="term" value="P:protein ubiquitination"/>
    <property type="evidence" value="ECO:0000314"/>
    <property type="project" value="SGD"/>
</dbReference>
<dbReference type="GO" id="GO:0031146">
    <property type="term" value="P:SCF-dependent proteasomal ubiquitin-dependent protein catabolic process"/>
    <property type="evidence" value="ECO:0000314"/>
    <property type="project" value="SGD"/>
</dbReference>
<dbReference type="GO" id="GO:0030435">
    <property type="term" value="P:sporulation resulting in formation of a cellular spore"/>
    <property type="evidence" value="ECO:0007669"/>
    <property type="project" value="UniProtKB-KW"/>
</dbReference>
<dbReference type="GO" id="GO:0006511">
    <property type="term" value="P:ubiquitin-dependent protein catabolic process"/>
    <property type="evidence" value="ECO:0000314"/>
    <property type="project" value="ComplexPortal"/>
</dbReference>
<dbReference type="CDD" id="cd22141">
    <property type="entry name" value="F-box_ScCDC4-like"/>
    <property type="match status" value="1"/>
</dbReference>
<dbReference type="CDD" id="cd00200">
    <property type="entry name" value="WD40"/>
    <property type="match status" value="1"/>
</dbReference>
<dbReference type="FunFam" id="2.130.10.10:FF:001022">
    <property type="entry name" value="Ubiquitin ligase subunit"/>
    <property type="match status" value="1"/>
</dbReference>
<dbReference type="Gene3D" id="1.20.1280.50">
    <property type="match status" value="1"/>
</dbReference>
<dbReference type="Gene3D" id="2.130.10.10">
    <property type="entry name" value="YVTN repeat-like/Quinoprotein amine dehydrogenase"/>
    <property type="match status" value="1"/>
</dbReference>
<dbReference type="InterPro" id="IPR031740">
    <property type="entry name" value="Cdc4_D"/>
</dbReference>
<dbReference type="InterPro" id="IPR036047">
    <property type="entry name" value="F-box-like_dom_sf"/>
</dbReference>
<dbReference type="InterPro" id="IPR001810">
    <property type="entry name" value="F-box_dom"/>
</dbReference>
<dbReference type="InterPro" id="IPR020472">
    <property type="entry name" value="G-protein_beta_WD-40_rep"/>
</dbReference>
<dbReference type="InterPro" id="IPR015943">
    <property type="entry name" value="WD40/YVTN_repeat-like_dom_sf"/>
</dbReference>
<dbReference type="InterPro" id="IPR019775">
    <property type="entry name" value="WD40_repeat_CS"/>
</dbReference>
<dbReference type="InterPro" id="IPR036322">
    <property type="entry name" value="WD40_repeat_dom_sf"/>
</dbReference>
<dbReference type="InterPro" id="IPR001680">
    <property type="entry name" value="WD40_rpt"/>
</dbReference>
<dbReference type="PANTHER" id="PTHR19849:SF1">
    <property type="entry name" value="F-BOX_WD REPEAT-CONTAINING PROTEIN 7"/>
    <property type="match status" value="1"/>
</dbReference>
<dbReference type="PANTHER" id="PTHR19849">
    <property type="entry name" value="PHOSPHOLIPASE A-2-ACTIVATING PROTEIN"/>
    <property type="match status" value="1"/>
</dbReference>
<dbReference type="Pfam" id="PF16856">
    <property type="entry name" value="CDC4_D"/>
    <property type="match status" value="1"/>
</dbReference>
<dbReference type="Pfam" id="PF12937">
    <property type="entry name" value="F-box-like"/>
    <property type="match status" value="1"/>
</dbReference>
<dbReference type="Pfam" id="PF00400">
    <property type="entry name" value="WD40"/>
    <property type="match status" value="6"/>
</dbReference>
<dbReference type="PRINTS" id="PR00320">
    <property type="entry name" value="GPROTEINBRPT"/>
</dbReference>
<dbReference type="SMART" id="SM00256">
    <property type="entry name" value="FBOX"/>
    <property type="match status" value="1"/>
</dbReference>
<dbReference type="SMART" id="SM00320">
    <property type="entry name" value="WD40"/>
    <property type="match status" value="7"/>
</dbReference>
<dbReference type="SUPFAM" id="SSF81383">
    <property type="entry name" value="F-box domain"/>
    <property type="match status" value="1"/>
</dbReference>
<dbReference type="SUPFAM" id="SSF50978">
    <property type="entry name" value="WD40 repeat-like"/>
    <property type="match status" value="1"/>
</dbReference>
<dbReference type="PROSITE" id="PS50181">
    <property type="entry name" value="FBOX"/>
    <property type="match status" value="1"/>
</dbReference>
<dbReference type="PROSITE" id="PS00678">
    <property type="entry name" value="WD_REPEATS_1"/>
    <property type="match status" value="4"/>
</dbReference>
<dbReference type="PROSITE" id="PS50082">
    <property type="entry name" value="WD_REPEATS_2"/>
    <property type="match status" value="5"/>
</dbReference>
<dbReference type="PROSITE" id="PS50294">
    <property type="entry name" value="WD_REPEATS_REGION"/>
    <property type="match status" value="1"/>
</dbReference>
<feature type="chain" id="PRO_0000050899" description="Cell division control protein 4">
    <location>
        <begin position="1"/>
        <end position="779"/>
    </location>
</feature>
<feature type="domain" description="F-box" evidence="1">
    <location>
        <begin position="272"/>
        <end position="319"/>
    </location>
</feature>
<feature type="repeat" description="WD 1">
    <location>
        <begin position="380"/>
        <end position="408"/>
    </location>
</feature>
<feature type="repeat" description="WD 2">
    <location>
        <begin position="420"/>
        <end position="449"/>
    </location>
</feature>
<feature type="repeat" description="WD 3">
    <location>
        <begin position="461"/>
        <end position="493"/>
    </location>
</feature>
<feature type="repeat" description="WD 4">
    <location>
        <begin position="528"/>
        <end position="556"/>
    </location>
</feature>
<feature type="repeat" description="WD 5">
    <location>
        <begin position="568"/>
        <end position="598"/>
    </location>
</feature>
<feature type="repeat" description="WD 6">
    <location>
        <begin position="630"/>
        <end position="658"/>
    </location>
</feature>
<feature type="repeat" description="WD 7">
    <location>
        <begin position="669"/>
        <end position="698"/>
    </location>
</feature>
<feature type="region of interest" description="Disordered" evidence="2">
    <location>
        <begin position="39"/>
        <end position="80"/>
    </location>
</feature>
<feature type="short sequence motif" description="Nuclear localization signal">
    <location>
        <begin position="82"/>
        <end position="85"/>
    </location>
</feature>
<feature type="modified residue" description="Phosphoserine" evidence="19">
    <location>
        <position position="104"/>
    </location>
</feature>
<feature type="mutagenesis site" description="Prevents nuclear localization; when associated with A-83 and A-85.">
    <original>K</original>
    <variation>A</variation>
    <location>
        <position position="82"/>
    </location>
</feature>
<feature type="mutagenesis site" description="Prevents nuclear localization; when associated with A-82 and A-85.">
    <original>R</original>
    <variation>A</variation>
    <location>
        <position position="83"/>
    </location>
</feature>
<feature type="mutagenesis site" description="Prevents nuclear localization.">
    <original>R</original>
    <variation>G</variation>
    <location>
        <position position="83"/>
    </location>
</feature>
<feature type="mutagenesis site" description="Prevents nuclear localization; when associated with A-82 and A-83." evidence="6">
    <original>K</original>
    <variation>A</variation>
    <location>
        <position position="85"/>
    </location>
</feature>
<feature type="sequence conflict" description="In Ref. 1; CAA29113." evidence="18" ref="1">
    <original>K</original>
    <variation>E</variation>
    <location>
        <position position="460"/>
    </location>
</feature>
<feature type="helix" evidence="20">
    <location>
        <begin position="228"/>
        <end position="234"/>
    </location>
</feature>
<feature type="helix" evidence="20">
    <location>
        <begin position="235"/>
        <end position="237"/>
    </location>
</feature>
<feature type="helix" evidence="20">
    <location>
        <begin position="242"/>
        <end position="253"/>
    </location>
</feature>
<feature type="helix" evidence="20">
    <location>
        <begin position="256"/>
        <end position="271"/>
    </location>
</feature>
<feature type="helix" evidence="22">
    <location>
        <begin position="274"/>
        <end position="277"/>
    </location>
</feature>
<feature type="helix" evidence="22">
    <location>
        <begin position="280"/>
        <end position="287"/>
    </location>
</feature>
<feature type="helix" evidence="22">
    <location>
        <begin position="292"/>
        <end position="299"/>
    </location>
</feature>
<feature type="helix" evidence="22">
    <location>
        <begin position="303"/>
        <end position="309"/>
    </location>
</feature>
<feature type="helix" evidence="22">
    <location>
        <begin position="313"/>
        <end position="322"/>
    </location>
</feature>
<feature type="turn" evidence="22">
    <location>
        <begin position="328"/>
        <end position="330"/>
    </location>
</feature>
<feature type="helix" evidence="22">
    <location>
        <begin position="331"/>
        <end position="341"/>
    </location>
</feature>
<feature type="helix" evidence="22">
    <location>
        <begin position="347"/>
        <end position="366"/>
    </location>
</feature>
<feature type="strand" evidence="22">
    <location>
        <begin position="373"/>
        <end position="378"/>
    </location>
</feature>
<feature type="strand" evidence="22">
    <location>
        <begin position="381"/>
        <end position="383"/>
    </location>
</feature>
<feature type="strand" evidence="22">
    <location>
        <begin position="385"/>
        <end position="391"/>
    </location>
</feature>
<feature type="strand" evidence="22">
    <location>
        <begin position="394"/>
        <end position="399"/>
    </location>
</feature>
<feature type="strand" evidence="22">
    <location>
        <begin position="404"/>
        <end position="408"/>
    </location>
</feature>
<feature type="turn" evidence="22">
    <location>
        <begin position="409"/>
        <end position="412"/>
    </location>
</feature>
<feature type="strand" evidence="22">
    <location>
        <begin position="413"/>
        <end position="418"/>
    </location>
</feature>
<feature type="strand" evidence="22">
    <location>
        <begin position="425"/>
        <end position="430"/>
    </location>
</feature>
<feature type="turn" evidence="21">
    <location>
        <begin position="432"/>
        <end position="434"/>
    </location>
</feature>
<feature type="strand" evidence="22">
    <location>
        <begin position="435"/>
        <end position="440"/>
    </location>
</feature>
<feature type="strand" evidence="22">
    <location>
        <begin position="445"/>
        <end position="449"/>
    </location>
</feature>
<feature type="turn" evidence="22">
    <location>
        <begin position="450"/>
        <end position="453"/>
    </location>
</feature>
<feature type="strand" evidence="22">
    <location>
        <begin position="454"/>
        <end position="459"/>
    </location>
</feature>
<feature type="strand" evidence="22">
    <location>
        <begin position="466"/>
        <end position="476"/>
    </location>
</feature>
<feature type="strand" evidence="22">
    <location>
        <begin position="478"/>
        <end position="484"/>
    </location>
</feature>
<feature type="strand" evidence="22">
    <location>
        <begin position="489"/>
        <end position="493"/>
    </location>
</feature>
<feature type="strand" evidence="22">
    <location>
        <begin position="509"/>
        <end position="514"/>
    </location>
</feature>
<feature type="helix" evidence="22">
    <location>
        <begin position="516"/>
        <end position="518"/>
    </location>
</feature>
<feature type="strand" evidence="22">
    <location>
        <begin position="522"/>
        <end position="526"/>
    </location>
</feature>
<feature type="strand" evidence="22">
    <location>
        <begin position="533"/>
        <end position="539"/>
    </location>
</feature>
<feature type="strand" evidence="22">
    <location>
        <begin position="542"/>
        <end position="547"/>
    </location>
</feature>
<feature type="strand" evidence="22">
    <location>
        <begin position="552"/>
        <end position="556"/>
    </location>
</feature>
<feature type="turn" evidence="22">
    <location>
        <begin position="557"/>
        <end position="560"/>
    </location>
</feature>
<feature type="strand" evidence="22">
    <location>
        <begin position="561"/>
        <end position="566"/>
    </location>
</feature>
<feature type="strand" evidence="22">
    <location>
        <begin position="573"/>
        <end position="579"/>
    </location>
</feature>
<feature type="turn" evidence="22">
    <location>
        <begin position="580"/>
        <end position="583"/>
    </location>
</feature>
<feature type="strand" evidence="22">
    <location>
        <begin position="584"/>
        <end position="589"/>
    </location>
</feature>
<feature type="strand" evidence="22">
    <location>
        <begin position="594"/>
        <end position="598"/>
    </location>
</feature>
<feature type="turn" evidence="22">
    <location>
        <begin position="599"/>
        <end position="601"/>
    </location>
</feature>
<feature type="strand" evidence="22">
    <location>
        <begin position="625"/>
        <end position="628"/>
    </location>
</feature>
<feature type="strand" evidence="22">
    <location>
        <begin position="635"/>
        <end position="640"/>
    </location>
</feature>
<feature type="strand" evidence="22">
    <location>
        <begin position="642"/>
        <end position="649"/>
    </location>
</feature>
<feature type="strand" evidence="22">
    <location>
        <begin position="652"/>
        <end position="658"/>
    </location>
</feature>
<feature type="turn" evidence="22">
    <location>
        <begin position="659"/>
        <end position="661"/>
    </location>
</feature>
<feature type="strand" evidence="22">
    <location>
        <begin position="664"/>
        <end position="669"/>
    </location>
</feature>
<feature type="strand" evidence="22">
    <location>
        <begin position="676"/>
        <end position="681"/>
    </location>
</feature>
<feature type="strand" evidence="22">
    <location>
        <begin position="683"/>
        <end position="690"/>
    </location>
</feature>
<feature type="strand" evidence="22">
    <location>
        <begin position="693"/>
        <end position="698"/>
    </location>
</feature>
<feature type="turn" evidence="22">
    <location>
        <begin position="699"/>
        <end position="701"/>
    </location>
</feature>
<feature type="strand" evidence="22">
    <location>
        <begin position="704"/>
        <end position="707"/>
    </location>
</feature>
<feature type="turn" evidence="22">
    <location>
        <begin position="709"/>
        <end position="712"/>
    </location>
</feature>
<feature type="strand" evidence="22">
    <location>
        <begin position="714"/>
        <end position="722"/>
    </location>
</feature>
<feature type="strand" evidence="22">
    <location>
        <begin position="725"/>
        <end position="732"/>
    </location>
</feature>
<feature type="strand" evidence="22">
    <location>
        <begin position="735"/>
        <end position="742"/>
    </location>
</feature>
<sequence>MGSFPLAEFPLRDIPVPYSYRVSGGIASSGSVTALVTAAGTHRNSSTAKTVETEDGEEDIDEYQRKRAAGSGESTPERSDFKRVKHDNHKTLHPVNLQNTGAASVDNDGLHNLTDISNDAEKLLMSVDDGSAAPSTLSVNMGVASHNVAAPTTVNAATITGSDVSNNVNSATINNPMEEGALPLSPTASSPGTTTPLAKTTKTINNNNNIADLIESKDSIISPEYLSDEIFSAINNNLPHAYFKNLLFRLVANMDRSELSDLGTLIKDNLKRDLITSLPFEISLKIFNYLQFEDIINSLGVSQNWNKIIRKSTSLWKKLLISENFVSPKGFNSLNLKLSQKYPKLSQQDRLRLSFLENIFILKNWYNPKFVPQRTTLRGHMTSVITCLQFEDNYVITGADDKMIRVYDSINKKFLLQLSGHDGGVWALKYAHGGILVSGSTDRTVRVWDIKKGCCTHVFKGHNSTVRCLDIVEYKNIKYIVTGSRDNTLHVWKLPKESSVPDHGEEHDYPLVFHTPEENPYFVGVLRGHMASVRTVSGHGNIVVSGSYDNTLIVWDVAQMKCLYILSGHTDRIYSTIYDHERKRCISASMDTTIRIWDLENIWNNGECSYATNSASPCAKILGAMYTLQGHTALVGLLRLSDKFLVSAAADGSIRGWDANDYSRKFSYHHTNLSAITTFYVSDNILVSGSENQFNIYNLRSGKLVHANILKDADQIWSVNFKGKTLVAAVEKDGQSFLEILDFSKASKINYVSNPVNSSSSSLESISTSLGLTRTTIIP</sequence>
<comment type="function">
    <text evidence="3 5 6 10 12 13 14 15 17">Substrate recognition component of a SCF (SKP1-CUL1-F-box protein) E3 ubiquitin-protein ligase complex which mediates the ubiquitination and subsequent proteasomal degradation of target proteins. Recognizes and binds to phosphorylated target proteins. Directs ubiquitination of the phosphorylated CDK inhibitor SIC1. Involved in the degradation of CDC6 together with CDC34/UBC3 and CDC53, and in restricting the degradation of FAR1 to the nucleus. Is essential for initiation of DNA replication and separation of the spindle pole bodies to form the poles of the mitotic spindle. It also plays a role in bud development, fusion of zygotic nuclei after conjugation and various aspects of sporulation. Required for HTA1-HTB1 locus transcription activation. Required for G1/S and G2/M transition.</text>
</comment>
<comment type="pathway">
    <text>Protein modification; protein ubiquitination.</text>
</comment>
<comment type="subunit">
    <text evidence="4 7 8 9 11 12 13 14 15 16 17">Interacts with DCD53 and SKP1. Component of the SCF(CDC4) complex containing CDC53, SKP1, RBX1 and CDC4. CDC34. Interacts with CDC6 and CIC1. Interacts with SIC1; the interaction involves a SIC1 double phosphorylated motif (degron). Homodimerizes; the dimerization increases SIC1 ubiquitination in vitro.</text>
</comment>
<comment type="interaction">
    <interactant intactId="EBI-4434">
        <id>P07834</id>
    </interactant>
    <interactant intactId="EBI-4321">
        <id>Q12018</id>
        <label>CDC53</label>
    </interactant>
    <organismsDiffer>false</organismsDiffer>
    <experiments>9</experiments>
</comment>
<comment type="interaction">
    <interactant intactId="EBI-4434">
        <id>P07834</id>
    </interactant>
    <interactant intactId="EBI-24538">
        <id>P38779</id>
        <label>CIC1</label>
    </interactant>
    <organismsDiffer>false</organismsDiffer>
    <experiments>2</experiments>
</comment>
<comment type="interaction">
    <interactant intactId="EBI-4434">
        <id>P07834</id>
    </interactant>
    <interactant intactId="EBI-31686">
        <id>Q08273</id>
        <label>HRT1</label>
    </interactant>
    <organismsDiffer>false</organismsDiffer>
    <experiments>3</experiments>
</comment>
<comment type="interaction">
    <interactant intactId="EBI-4434">
        <id>P07834</id>
    </interactant>
    <interactant intactId="EBI-14898">
        <id>P36054</id>
        <label>RCN1</label>
    </interactant>
    <organismsDiffer>false</organismsDiffer>
    <experiments>4</experiments>
</comment>
<comment type="interaction">
    <interactant intactId="EBI-4434">
        <id>P07834</id>
    </interactant>
    <interactant intactId="EBI-17127">
        <id>P38634</id>
        <label>SIC1</label>
    </interactant>
    <organismsDiffer>false</organismsDiffer>
    <experiments>5</experiments>
</comment>
<comment type="interaction">
    <interactant intactId="EBI-4434">
        <id>P07834</id>
    </interactant>
    <interactant intactId="EBI-4090">
        <id>P52286</id>
        <label>SKP1</label>
    </interactant>
    <organismsDiffer>false</organismsDiffer>
    <experiments>14</experiments>
</comment>
<comment type="subcellular location">
    <subcellularLocation>
        <location evidence="6">Nucleus</location>
    </subcellularLocation>
</comment>
<gene>
    <name type="primary">CDC4</name>
    <name type="ordered locus">YFL009W</name>
</gene>
<accession>P07834</accession>
<accession>D6VTM1</accession>
<protein>
    <recommendedName>
        <fullName>Cell division control protein 4</fullName>
    </recommendedName>
    <alternativeName>
        <fullName>E3 ubiquitin ligase complex SCF subunit CDC4</fullName>
    </alternativeName>
    <alternativeName>
        <fullName>F-box protein CDC4</fullName>
    </alternativeName>
</protein>
<keyword id="KW-0002">3D-structure</keyword>
<keyword id="KW-0131">Cell cycle</keyword>
<keyword id="KW-0132">Cell division</keyword>
<keyword id="KW-0498">Mitosis</keyword>
<keyword id="KW-0539">Nucleus</keyword>
<keyword id="KW-0597">Phosphoprotein</keyword>
<keyword id="KW-1185">Reference proteome</keyword>
<keyword id="KW-0677">Repeat</keyword>
<keyword id="KW-0749">Sporulation</keyword>
<keyword id="KW-0833">Ubl conjugation pathway</keyword>
<keyword id="KW-0853">WD repeat</keyword>